<organism>
    <name type="scientific">Pongo abelii</name>
    <name type="common">Sumatran orangutan</name>
    <name type="synonym">Pongo pygmaeus abelii</name>
    <dbReference type="NCBI Taxonomy" id="9601"/>
    <lineage>
        <taxon>Eukaryota</taxon>
        <taxon>Metazoa</taxon>
        <taxon>Chordata</taxon>
        <taxon>Craniata</taxon>
        <taxon>Vertebrata</taxon>
        <taxon>Euteleostomi</taxon>
        <taxon>Mammalia</taxon>
        <taxon>Eutheria</taxon>
        <taxon>Euarchontoglires</taxon>
        <taxon>Primates</taxon>
        <taxon>Haplorrhini</taxon>
        <taxon>Catarrhini</taxon>
        <taxon>Hominidae</taxon>
        <taxon>Pongo</taxon>
    </lineage>
</organism>
<feature type="chain" id="PRO_0000058285" description="PDZK1-interacting protein 1">
    <location>
        <begin position="1"/>
        <end position="114"/>
    </location>
</feature>
<feature type="topological domain" description="Extracellular" evidence="1">
    <location>
        <begin position="1"/>
        <end position="28"/>
    </location>
</feature>
<feature type="transmembrane region" description="Helical" evidence="1">
    <location>
        <begin position="29"/>
        <end position="51"/>
    </location>
</feature>
<feature type="topological domain" description="Cytoplasmic" evidence="1">
    <location>
        <begin position="52"/>
        <end position="114"/>
    </location>
</feature>
<feature type="region of interest" description="Disordered" evidence="3">
    <location>
        <begin position="95"/>
        <end position="114"/>
    </location>
</feature>
<feature type="compositionally biased region" description="Basic and acidic residues" evidence="3">
    <location>
        <begin position="105"/>
        <end position="114"/>
    </location>
</feature>
<feature type="modified residue" description="Phosphoserine" evidence="2">
    <location>
        <position position="85"/>
    </location>
</feature>
<proteinExistence type="inferred from homology"/>
<reference key="1">
    <citation type="submission" date="2004-11" db="EMBL/GenBank/DDBJ databases">
        <authorList>
            <consortium name="The German cDNA consortium"/>
        </authorList>
    </citation>
    <scope>NUCLEOTIDE SEQUENCE [LARGE SCALE MRNA]</scope>
    <source>
        <tissue>Kidney</tissue>
    </source>
</reference>
<keyword id="KW-1003">Cell membrane</keyword>
<keyword id="KW-0472">Membrane</keyword>
<keyword id="KW-0597">Phosphoprotein</keyword>
<keyword id="KW-1185">Reference proteome</keyword>
<keyword id="KW-0812">Transmembrane</keyword>
<keyword id="KW-1133">Transmembrane helix</keyword>
<name>PDZ1I_PONAB</name>
<evidence type="ECO:0000250" key="1">
    <source>
        <dbReference type="UniProtKB" id="Q13113"/>
    </source>
</evidence>
<evidence type="ECO:0000250" key="2">
    <source>
        <dbReference type="UniProtKB" id="Q9CQH0"/>
    </source>
</evidence>
<evidence type="ECO:0000256" key="3">
    <source>
        <dbReference type="SAM" id="MobiDB-lite"/>
    </source>
</evidence>
<evidence type="ECO:0000305" key="4"/>
<protein>
    <recommendedName>
        <fullName>PDZK1-interacting protein 1</fullName>
    </recommendedName>
    <alternativeName>
        <fullName>17 kDa membrane-associated protein</fullName>
    </alternativeName>
</protein>
<dbReference type="EMBL" id="CR859180">
    <property type="protein sequence ID" value="CAH91369.1"/>
    <property type="molecule type" value="mRNA"/>
</dbReference>
<dbReference type="RefSeq" id="NP_001127409.1">
    <property type="nucleotide sequence ID" value="NM_001133937.2"/>
</dbReference>
<dbReference type="SMR" id="Q5RA41"/>
<dbReference type="FunCoup" id="Q5RA41">
    <property type="interactions" value="95"/>
</dbReference>
<dbReference type="STRING" id="9601.ENSPPYP00000001603"/>
<dbReference type="GeneID" id="100174479"/>
<dbReference type="KEGG" id="pon:100174479"/>
<dbReference type="CTD" id="10158"/>
<dbReference type="eggNOG" id="ENOG502SAPW">
    <property type="taxonomic scope" value="Eukaryota"/>
</dbReference>
<dbReference type="InParanoid" id="Q5RA41"/>
<dbReference type="OrthoDB" id="9900654at2759"/>
<dbReference type="Proteomes" id="UP000001595">
    <property type="component" value="Unplaced"/>
</dbReference>
<dbReference type="GO" id="GO:0016324">
    <property type="term" value="C:apical plasma membrane"/>
    <property type="evidence" value="ECO:0007669"/>
    <property type="project" value="UniProtKB-SubCell"/>
</dbReference>
<dbReference type="InterPro" id="IPR031627">
    <property type="entry name" value="PDZK1IP1/SMIM24"/>
</dbReference>
<dbReference type="PANTHER" id="PTHR15296">
    <property type="entry name" value="MEMBRANE-ASSOCIATED PROTEIN MAP17"/>
    <property type="match status" value="1"/>
</dbReference>
<dbReference type="PANTHER" id="PTHR15296:SF0">
    <property type="entry name" value="PDZK1-INTERACTING PROTEIN 1"/>
    <property type="match status" value="1"/>
</dbReference>
<dbReference type="Pfam" id="PF15807">
    <property type="entry name" value="MAP17"/>
    <property type="match status" value="1"/>
</dbReference>
<accession>Q5RA41</accession>
<comment type="function">
    <text evidence="1">Auxiliary protein of electrogenic Na(+)-coupled sugar symporter SLC5A2/SGLT2 and SLC5A1/SGLT1 (By similarity). Essential for the transporter activity of SLC5A2/SGLT2 but not SLC5A1/SGLT1 (By similarity).</text>
</comment>
<comment type="subunit">
    <text evidence="1">Forms a heterodimer (via N-terminal transmembrane helix) with SLC5A2/SGLT2 (via TM13); this interaction enhances SLC5A2 transporter activity (By similarity). Interacts with PDZK1 (By similarity).</text>
</comment>
<comment type="subcellular location">
    <subcellularLocation>
        <location evidence="1">Apical cell membrane</location>
        <topology evidence="1">Single-pass membrane protein</topology>
    </subcellularLocation>
</comment>
<comment type="similarity">
    <text evidence="4">Belongs to the PDZK1-interacting protein 1/SMIM24 family.</text>
</comment>
<sequence length="114" mass="12241">MSAFGLLILGLLTAVPPASCRQGLGNLQPWMQGLIAVAVFLVLVAIAFAVNHFWCQEEPEPAHMILTIGNKADGVLVGTDGRYSSVAASFRSSEHENAYENVPEEEGKVRSTPM</sequence>
<gene>
    <name evidence="1" type="primary">PDZK1IP1</name>
    <name evidence="1" type="synonym">MAP17</name>
</gene>